<gene>
    <name type="primary">CGR1</name>
    <name type="ordered locus">AFR481W</name>
</gene>
<feature type="chain" id="PRO_0000278944" description="rRNA-processing protein CGR1">
    <location>
        <begin position="1"/>
        <end position="115"/>
    </location>
</feature>
<feature type="region of interest" description="Disordered" evidence="3">
    <location>
        <begin position="96"/>
        <end position="115"/>
    </location>
</feature>
<feature type="coiled-coil region" evidence="2">
    <location>
        <begin position="40"/>
        <end position="101"/>
    </location>
</feature>
<feature type="compositionally biased region" description="Basic residues" evidence="3">
    <location>
        <begin position="96"/>
        <end position="108"/>
    </location>
</feature>
<comment type="function">
    <text evidence="1">Involved in nucleolar integrity and required for processing of the pre-rRNA for the 60S ribosome subunit.</text>
</comment>
<comment type="subcellular location">
    <subcellularLocation>
        <location evidence="1">Nucleus</location>
        <location evidence="1">Nucleolus</location>
    </subcellularLocation>
</comment>
<comment type="similarity">
    <text evidence="4">Belongs to the CGR1 family.</text>
</comment>
<organism>
    <name type="scientific">Eremothecium gossypii (strain ATCC 10895 / CBS 109.51 / FGSC 9923 / NRRL Y-1056)</name>
    <name type="common">Yeast</name>
    <name type="synonym">Ashbya gossypii</name>
    <dbReference type="NCBI Taxonomy" id="284811"/>
    <lineage>
        <taxon>Eukaryota</taxon>
        <taxon>Fungi</taxon>
        <taxon>Dikarya</taxon>
        <taxon>Ascomycota</taxon>
        <taxon>Saccharomycotina</taxon>
        <taxon>Saccharomycetes</taxon>
        <taxon>Saccharomycetales</taxon>
        <taxon>Saccharomycetaceae</taxon>
        <taxon>Eremothecium</taxon>
    </lineage>
</organism>
<protein>
    <recommendedName>
        <fullName>rRNA-processing protein CGR1</fullName>
    </recommendedName>
</protein>
<sequence>MAVKNLEKGINVSGRVWKSEKDAFRATSKVIKNKKLTSWELKREQRQLDQQFKERMNALKNEKEEERQQRIKALRERREKKEEKERYERLAARMHAKKVERMRRREKRNKALKER</sequence>
<name>CGR1_EREGS</name>
<reference key="1">
    <citation type="journal article" date="2004" name="Science">
        <title>The Ashbya gossypii genome as a tool for mapping the ancient Saccharomyces cerevisiae genome.</title>
        <authorList>
            <person name="Dietrich F.S."/>
            <person name="Voegeli S."/>
            <person name="Brachat S."/>
            <person name="Lerch A."/>
            <person name="Gates K."/>
            <person name="Steiner S."/>
            <person name="Mohr C."/>
            <person name="Poehlmann R."/>
            <person name="Luedi P."/>
            <person name="Choi S."/>
            <person name="Wing R.A."/>
            <person name="Flavier A."/>
            <person name="Gaffney T.D."/>
            <person name="Philippsen P."/>
        </authorList>
    </citation>
    <scope>NUCLEOTIDE SEQUENCE [LARGE SCALE GENOMIC DNA]</scope>
    <source>
        <strain>ATCC 10895 / CBS 109.51 / FGSC 9923 / NRRL Y-1056</strain>
    </source>
</reference>
<reference key="2">
    <citation type="journal article" date="2013" name="G3 (Bethesda)">
        <title>Genomes of Ashbya fungi isolated from insects reveal four mating-type loci, numerous translocations, lack of transposons, and distinct gene duplications.</title>
        <authorList>
            <person name="Dietrich F.S."/>
            <person name="Voegeli S."/>
            <person name="Kuo S."/>
            <person name="Philippsen P."/>
        </authorList>
    </citation>
    <scope>GENOME REANNOTATION</scope>
    <source>
        <strain>ATCC 10895 / CBS 109.51 / FGSC 9923 / NRRL Y-1056</strain>
    </source>
</reference>
<dbReference type="EMBL" id="AE016819">
    <property type="protein sequence ID" value="AAS53852.1"/>
    <property type="molecule type" value="Genomic_DNA"/>
</dbReference>
<dbReference type="RefSeq" id="NP_986028.1">
    <property type="nucleotide sequence ID" value="NM_212164.1"/>
</dbReference>
<dbReference type="SMR" id="Q752U2"/>
<dbReference type="STRING" id="284811.Q752U2"/>
<dbReference type="EnsemblFungi" id="AAS53852">
    <property type="protein sequence ID" value="AAS53852"/>
    <property type="gene ID" value="AGOS_AFR481W"/>
</dbReference>
<dbReference type="GeneID" id="4622307"/>
<dbReference type="KEGG" id="ago:AGOS_AFR481W"/>
<dbReference type="eggNOG" id="ENOG502S7VB">
    <property type="taxonomic scope" value="Eukaryota"/>
</dbReference>
<dbReference type="HOGENOM" id="CLU_125051_0_1_1"/>
<dbReference type="InParanoid" id="Q752U2"/>
<dbReference type="OMA" id="NGKQWHD"/>
<dbReference type="OrthoDB" id="3942380at2759"/>
<dbReference type="Proteomes" id="UP000000591">
    <property type="component" value="Chromosome VI"/>
</dbReference>
<dbReference type="GO" id="GO:0005730">
    <property type="term" value="C:nucleolus"/>
    <property type="evidence" value="ECO:0007669"/>
    <property type="project" value="UniProtKB-SubCell"/>
</dbReference>
<dbReference type="GO" id="GO:0006364">
    <property type="term" value="P:rRNA processing"/>
    <property type="evidence" value="ECO:0007669"/>
    <property type="project" value="UniProtKB-KW"/>
</dbReference>
<dbReference type="InterPro" id="IPR005579">
    <property type="entry name" value="Cgr1-like"/>
</dbReference>
<dbReference type="Pfam" id="PF03879">
    <property type="entry name" value="Cgr1"/>
    <property type="match status" value="1"/>
</dbReference>
<evidence type="ECO:0000250" key="1"/>
<evidence type="ECO:0000255" key="2"/>
<evidence type="ECO:0000256" key="3">
    <source>
        <dbReference type="SAM" id="MobiDB-lite"/>
    </source>
</evidence>
<evidence type="ECO:0000305" key="4"/>
<proteinExistence type="inferred from homology"/>
<accession>Q752U2</accession>
<keyword id="KW-0175">Coiled coil</keyword>
<keyword id="KW-0539">Nucleus</keyword>
<keyword id="KW-1185">Reference proteome</keyword>
<keyword id="KW-0690">Ribosome biogenesis</keyword>
<keyword id="KW-0698">rRNA processing</keyword>